<protein>
    <recommendedName>
        <fullName evidence="1">tRNA-2-methylthio-N(6)-dimethylallyladenosine synthase</fullName>
        <ecNumber evidence="1">2.8.4.3</ecNumber>
    </recommendedName>
    <alternativeName>
        <fullName evidence="1">(Dimethylallyl)adenosine tRNA methylthiotransferase MiaB</fullName>
    </alternativeName>
    <alternativeName>
        <fullName evidence="1">tRNA-i(6)A37 methylthiotransferase</fullName>
    </alternativeName>
</protein>
<gene>
    <name evidence="1" type="primary">miaB</name>
    <name type="ordered locus">FP1979</name>
</gene>
<reference key="1">
    <citation type="journal article" date="2007" name="Nat. Biotechnol.">
        <title>Complete genome sequence of the fish pathogen Flavobacterium psychrophilum.</title>
        <authorList>
            <person name="Duchaud E."/>
            <person name="Boussaha M."/>
            <person name="Loux V."/>
            <person name="Bernardet J.-F."/>
            <person name="Michel C."/>
            <person name="Kerouault B."/>
            <person name="Mondot S."/>
            <person name="Nicolas P."/>
            <person name="Bossy R."/>
            <person name="Caron C."/>
            <person name="Bessieres P."/>
            <person name="Gibrat J.-F."/>
            <person name="Claverol S."/>
            <person name="Dumetz F."/>
            <person name="Le Henaff M."/>
            <person name="Benmansour A."/>
        </authorList>
    </citation>
    <scope>NUCLEOTIDE SEQUENCE [LARGE SCALE GENOMIC DNA]</scope>
    <source>
        <strain>ATCC 49511 / DSM 21280 / CIP 103535 / JIP02/86</strain>
    </source>
</reference>
<name>MIAB_FLAPJ</name>
<comment type="function">
    <text evidence="1">Catalyzes the methylthiolation of N6-(dimethylallyl)adenosine (i(6)A), leading to the formation of 2-methylthio-N6-(dimethylallyl)adenosine (ms(2)i(6)A) at position 37 in tRNAs that read codons beginning with uridine.</text>
</comment>
<comment type="catalytic activity">
    <reaction evidence="1">
        <text>N(6)-dimethylallyladenosine(37) in tRNA + (sulfur carrier)-SH + AH2 + 2 S-adenosyl-L-methionine = 2-methylsulfanyl-N(6)-dimethylallyladenosine(37) in tRNA + (sulfur carrier)-H + 5'-deoxyadenosine + L-methionine + A + S-adenosyl-L-homocysteine + 2 H(+)</text>
        <dbReference type="Rhea" id="RHEA:37067"/>
        <dbReference type="Rhea" id="RHEA-COMP:10375"/>
        <dbReference type="Rhea" id="RHEA-COMP:10376"/>
        <dbReference type="Rhea" id="RHEA-COMP:14737"/>
        <dbReference type="Rhea" id="RHEA-COMP:14739"/>
        <dbReference type="ChEBI" id="CHEBI:13193"/>
        <dbReference type="ChEBI" id="CHEBI:15378"/>
        <dbReference type="ChEBI" id="CHEBI:17319"/>
        <dbReference type="ChEBI" id="CHEBI:17499"/>
        <dbReference type="ChEBI" id="CHEBI:29917"/>
        <dbReference type="ChEBI" id="CHEBI:57844"/>
        <dbReference type="ChEBI" id="CHEBI:57856"/>
        <dbReference type="ChEBI" id="CHEBI:59789"/>
        <dbReference type="ChEBI" id="CHEBI:64428"/>
        <dbReference type="ChEBI" id="CHEBI:74415"/>
        <dbReference type="ChEBI" id="CHEBI:74417"/>
        <dbReference type="EC" id="2.8.4.3"/>
    </reaction>
</comment>
<comment type="cofactor">
    <cofactor evidence="1">
        <name>[4Fe-4S] cluster</name>
        <dbReference type="ChEBI" id="CHEBI:49883"/>
    </cofactor>
    <text evidence="1">Binds 2 [4Fe-4S] clusters. One cluster is coordinated with 3 cysteines and an exchangeable S-adenosyl-L-methionine.</text>
</comment>
<comment type="subunit">
    <text evidence="1">Monomer.</text>
</comment>
<comment type="subcellular location">
    <subcellularLocation>
        <location evidence="1">Cytoplasm</location>
    </subcellularLocation>
</comment>
<comment type="similarity">
    <text evidence="1">Belongs to the methylthiotransferase family. MiaB subfamily.</text>
</comment>
<organism>
    <name type="scientific">Flavobacterium psychrophilum (strain ATCC 49511 / DSM 21280 / CIP 103535 / JIP02/86)</name>
    <dbReference type="NCBI Taxonomy" id="402612"/>
    <lineage>
        <taxon>Bacteria</taxon>
        <taxon>Pseudomonadati</taxon>
        <taxon>Bacteroidota</taxon>
        <taxon>Flavobacteriia</taxon>
        <taxon>Flavobacteriales</taxon>
        <taxon>Flavobacteriaceae</taxon>
        <taxon>Flavobacterium</taxon>
    </lineage>
</organism>
<accession>A6H119</accession>
<dbReference type="EC" id="2.8.4.3" evidence="1"/>
<dbReference type="EMBL" id="AM398681">
    <property type="protein sequence ID" value="CAL44043.1"/>
    <property type="molecule type" value="Genomic_DNA"/>
</dbReference>
<dbReference type="RefSeq" id="WP_011964081.1">
    <property type="nucleotide sequence ID" value="NC_009613.3"/>
</dbReference>
<dbReference type="RefSeq" id="YP_001296845.1">
    <property type="nucleotide sequence ID" value="NC_009613.3"/>
</dbReference>
<dbReference type="SMR" id="A6H119"/>
<dbReference type="STRING" id="402612.FP1979"/>
<dbReference type="EnsemblBacteria" id="CAL44043">
    <property type="protein sequence ID" value="CAL44043"/>
    <property type="gene ID" value="FP1979"/>
</dbReference>
<dbReference type="GeneID" id="66551838"/>
<dbReference type="KEGG" id="fps:FP1979"/>
<dbReference type="PATRIC" id="fig|402612.5.peg.2002"/>
<dbReference type="eggNOG" id="COG0621">
    <property type="taxonomic scope" value="Bacteria"/>
</dbReference>
<dbReference type="HOGENOM" id="CLU_018697_2_1_10"/>
<dbReference type="OrthoDB" id="9805215at2"/>
<dbReference type="Proteomes" id="UP000006394">
    <property type="component" value="Chromosome"/>
</dbReference>
<dbReference type="GO" id="GO:0005829">
    <property type="term" value="C:cytosol"/>
    <property type="evidence" value="ECO:0007669"/>
    <property type="project" value="TreeGrafter"/>
</dbReference>
<dbReference type="GO" id="GO:0051539">
    <property type="term" value="F:4 iron, 4 sulfur cluster binding"/>
    <property type="evidence" value="ECO:0007669"/>
    <property type="project" value="UniProtKB-UniRule"/>
</dbReference>
<dbReference type="GO" id="GO:0046872">
    <property type="term" value="F:metal ion binding"/>
    <property type="evidence" value="ECO:0007669"/>
    <property type="project" value="UniProtKB-KW"/>
</dbReference>
<dbReference type="GO" id="GO:0035597">
    <property type="term" value="F:N6-isopentenyladenosine methylthiotransferase activity"/>
    <property type="evidence" value="ECO:0007669"/>
    <property type="project" value="TreeGrafter"/>
</dbReference>
<dbReference type="FunFam" id="3.40.50.12160:FF:000003">
    <property type="entry name" value="CDK5 regulatory subunit-associated protein 1"/>
    <property type="match status" value="1"/>
</dbReference>
<dbReference type="FunFam" id="3.80.30.20:FF:000001">
    <property type="entry name" value="tRNA-2-methylthio-N(6)-dimethylallyladenosine synthase 2"/>
    <property type="match status" value="1"/>
</dbReference>
<dbReference type="Gene3D" id="3.40.50.12160">
    <property type="entry name" value="Methylthiotransferase, N-terminal domain"/>
    <property type="match status" value="1"/>
</dbReference>
<dbReference type="Gene3D" id="3.80.30.20">
    <property type="entry name" value="tm_1862 like domain"/>
    <property type="match status" value="1"/>
</dbReference>
<dbReference type="HAMAP" id="MF_01864">
    <property type="entry name" value="tRNA_metthiotr_MiaB"/>
    <property type="match status" value="1"/>
</dbReference>
<dbReference type="InterPro" id="IPR006638">
    <property type="entry name" value="Elp3/MiaA/NifB-like_rSAM"/>
</dbReference>
<dbReference type="InterPro" id="IPR005839">
    <property type="entry name" value="Methylthiotransferase"/>
</dbReference>
<dbReference type="InterPro" id="IPR020612">
    <property type="entry name" value="Methylthiotransferase_CS"/>
</dbReference>
<dbReference type="InterPro" id="IPR013848">
    <property type="entry name" value="Methylthiotransferase_N"/>
</dbReference>
<dbReference type="InterPro" id="IPR038135">
    <property type="entry name" value="Methylthiotransferase_N_sf"/>
</dbReference>
<dbReference type="InterPro" id="IPR006463">
    <property type="entry name" value="MiaB_methiolase"/>
</dbReference>
<dbReference type="InterPro" id="IPR007197">
    <property type="entry name" value="rSAM"/>
</dbReference>
<dbReference type="InterPro" id="IPR023404">
    <property type="entry name" value="rSAM_horseshoe"/>
</dbReference>
<dbReference type="InterPro" id="IPR002792">
    <property type="entry name" value="TRAM_dom"/>
</dbReference>
<dbReference type="NCBIfam" id="TIGR01574">
    <property type="entry name" value="miaB-methiolase"/>
    <property type="match status" value="1"/>
</dbReference>
<dbReference type="NCBIfam" id="TIGR00089">
    <property type="entry name" value="MiaB/RimO family radical SAM methylthiotransferase"/>
    <property type="match status" value="1"/>
</dbReference>
<dbReference type="PANTHER" id="PTHR43020">
    <property type="entry name" value="CDK5 REGULATORY SUBUNIT-ASSOCIATED PROTEIN 1"/>
    <property type="match status" value="1"/>
</dbReference>
<dbReference type="PANTHER" id="PTHR43020:SF2">
    <property type="entry name" value="MITOCHONDRIAL TRNA METHYLTHIOTRANSFERASE CDK5RAP1"/>
    <property type="match status" value="1"/>
</dbReference>
<dbReference type="Pfam" id="PF04055">
    <property type="entry name" value="Radical_SAM"/>
    <property type="match status" value="1"/>
</dbReference>
<dbReference type="Pfam" id="PF01938">
    <property type="entry name" value="TRAM"/>
    <property type="match status" value="1"/>
</dbReference>
<dbReference type="Pfam" id="PF00919">
    <property type="entry name" value="UPF0004"/>
    <property type="match status" value="1"/>
</dbReference>
<dbReference type="SFLD" id="SFLDF00273">
    <property type="entry name" value="(dimethylallyl)adenosine_tRNA"/>
    <property type="match status" value="1"/>
</dbReference>
<dbReference type="SFLD" id="SFLDG01082">
    <property type="entry name" value="B12-binding_domain_containing"/>
    <property type="match status" value="1"/>
</dbReference>
<dbReference type="SFLD" id="SFLDF00413">
    <property type="entry name" value="CDK5RAP1"/>
    <property type="match status" value="1"/>
</dbReference>
<dbReference type="SFLD" id="SFLDS00029">
    <property type="entry name" value="Radical_SAM"/>
    <property type="match status" value="1"/>
</dbReference>
<dbReference type="SMART" id="SM00729">
    <property type="entry name" value="Elp3"/>
    <property type="match status" value="1"/>
</dbReference>
<dbReference type="SUPFAM" id="SSF102114">
    <property type="entry name" value="Radical SAM enzymes"/>
    <property type="match status" value="1"/>
</dbReference>
<dbReference type="PROSITE" id="PS51449">
    <property type="entry name" value="MTTASE_N"/>
    <property type="match status" value="1"/>
</dbReference>
<dbReference type="PROSITE" id="PS01278">
    <property type="entry name" value="MTTASE_RADICAL"/>
    <property type="match status" value="1"/>
</dbReference>
<dbReference type="PROSITE" id="PS51918">
    <property type="entry name" value="RADICAL_SAM"/>
    <property type="match status" value="1"/>
</dbReference>
<dbReference type="PROSITE" id="PS50926">
    <property type="entry name" value="TRAM"/>
    <property type="match status" value="1"/>
</dbReference>
<sequence>MEKIIEESKQGGSLILENKPENTKKLFIESYGCAMNFSDSEIVASILSGNGYNTTNVLEEADLVLVNTCSIRDKAEQTIRKRLEKYNAVKRINPKMKVGVLGCMAERLKDKFLEEEKIVDLVVGPDAYKDLPNLLNEVEEGRDAINVILSKDETYGDISPVRLMSNGITALVAITRGCDNMCTFCVVPFTRGRERSREPQSIMAEIQDLWHKGFKEITLLGQNVDSYLWYGGGLKKDFTNASEIQKATAVDFDQLLEMVAVGFPKMRIRFSTSNPQDMHESILHVMAKHSNICKHIHLPVQSGSNRILKEMNRLHTREEYMILIDKIRAIIPNASISQDMIAGFPTETEEDHQDTISLMQYVKYNFGYMYSYSERPGTLAGRKMKDDVSDEIKARRLQEIVDLQQKHAWWRSEDFIGQTVEVLVEKVSKKSTEEFSGRNSQSITVVFPKEHYKIGDFVNVKIKSCTSGTLKGEAVGYSEMN</sequence>
<feature type="chain" id="PRO_0000374301" description="tRNA-2-methylthio-N(6)-dimethylallyladenosine synthase">
    <location>
        <begin position="1"/>
        <end position="481"/>
    </location>
</feature>
<feature type="domain" description="MTTase N-terminal" evidence="1">
    <location>
        <begin position="24"/>
        <end position="140"/>
    </location>
</feature>
<feature type="domain" description="Radical SAM core" evidence="2">
    <location>
        <begin position="164"/>
        <end position="411"/>
    </location>
</feature>
<feature type="domain" description="TRAM" evidence="1">
    <location>
        <begin position="413"/>
        <end position="476"/>
    </location>
</feature>
<feature type="binding site" evidence="1">
    <location>
        <position position="33"/>
    </location>
    <ligand>
        <name>[4Fe-4S] cluster</name>
        <dbReference type="ChEBI" id="CHEBI:49883"/>
        <label>1</label>
    </ligand>
</feature>
<feature type="binding site" evidence="1">
    <location>
        <position position="69"/>
    </location>
    <ligand>
        <name>[4Fe-4S] cluster</name>
        <dbReference type="ChEBI" id="CHEBI:49883"/>
        <label>1</label>
    </ligand>
</feature>
<feature type="binding site" evidence="1">
    <location>
        <position position="103"/>
    </location>
    <ligand>
        <name>[4Fe-4S] cluster</name>
        <dbReference type="ChEBI" id="CHEBI:49883"/>
        <label>1</label>
    </ligand>
</feature>
<feature type="binding site" evidence="1">
    <location>
        <position position="178"/>
    </location>
    <ligand>
        <name>[4Fe-4S] cluster</name>
        <dbReference type="ChEBI" id="CHEBI:49883"/>
        <label>2</label>
        <note>4Fe-4S-S-AdoMet</note>
    </ligand>
</feature>
<feature type="binding site" evidence="1">
    <location>
        <position position="182"/>
    </location>
    <ligand>
        <name>[4Fe-4S] cluster</name>
        <dbReference type="ChEBI" id="CHEBI:49883"/>
        <label>2</label>
        <note>4Fe-4S-S-AdoMet</note>
    </ligand>
</feature>
<feature type="binding site" evidence="1">
    <location>
        <position position="185"/>
    </location>
    <ligand>
        <name>[4Fe-4S] cluster</name>
        <dbReference type="ChEBI" id="CHEBI:49883"/>
        <label>2</label>
        <note>4Fe-4S-S-AdoMet</note>
    </ligand>
</feature>
<proteinExistence type="inferred from homology"/>
<keyword id="KW-0004">4Fe-4S</keyword>
<keyword id="KW-0963">Cytoplasm</keyword>
<keyword id="KW-0408">Iron</keyword>
<keyword id="KW-0411">Iron-sulfur</keyword>
<keyword id="KW-0479">Metal-binding</keyword>
<keyword id="KW-1185">Reference proteome</keyword>
<keyword id="KW-0949">S-adenosyl-L-methionine</keyword>
<keyword id="KW-0808">Transferase</keyword>
<keyword id="KW-0819">tRNA processing</keyword>
<evidence type="ECO:0000255" key="1">
    <source>
        <dbReference type="HAMAP-Rule" id="MF_01864"/>
    </source>
</evidence>
<evidence type="ECO:0000255" key="2">
    <source>
        <dbReference type="PROSITE-ProRule" id="PRU01266"/>
    </source>
</evidence>